<gene>
    <name type="primary">VP5</name>
</gene>
<reference key="1">
    <citation type="journal article" date="1990" name="J. Gen. Virol.">
        <title>A comparison of the sequences of segment A of four infectious bursal disease virus strains and identification of a variable region in VP2.</title>
        <authorList>
            <person name="Bayliss C.D."/>
            <person name="Spies U."/>
            <person name="Shaw K."/>
            <person name="Peters R.W."/>
            <person name="Papageorgiou A."/>
            <person name="Mueller H."/>
            <person name="Boursnell M.E.G."/>
        </authorList>
    </citation>
    <scope>NUCLEOTIDE SEQUENCE [GENOMIC RNA]</scope>
</reference>
<dbReference type="EMBL" id="D00869">
    <property type="protein sequence ID" value="BAA00744.1"/>
    <property type="molecule type" value="Genomic_RNA"/>
</dbReference>
<dbReference type="PIR" id="JQ0942">
    <property type="entry name" value="JQ0942"/>
</dbReference>
<dbReference type="GO" id="GO:0033644">
    <property type="term" value="C:host cell membrane"/>
    <property type="evidence" value="ECO:0007669"/>
    <property type="project" value="UniProtKB-SubCell"/>
</dbReference>
<dbReference type="GO" id="GO:0016020">
    <property type="term" value="C:membrane"/>
    <property type="evidence" value="ECO:0007669"/>
    <property type="project" value="UniProtKB-KW"/>
</dbReference>
<dbReference type="InterPro" id="IPR004284">
    <property type="entry name" value="Birna_VP5"/>
</dbReference>
<dbReference type="Pfam" id="PF03042">
    <property type="entry name" value="Birna_VP5"/>
    <property type="match status" value="1"/>
</dbReference>
<accession>P25221</accession>
<protein>
    <recommendedName>
        <fullName>Protein VP5</fullName>
    </recommendedName>
</protein>
<feature type="chain" id="PRO_0000221965" description="Protein VP5">
    <location>
        <begin position="1"/>
        <end position="145"/>
    </location>
</feature>
<feature type="topological domain" description="Cytoplasmic" evidence="2">
    <location>
        <begin position="1"/>
        <end position="68"/>
    </location>
</feature>
<feature type="transmembrane region" description="Helical" evidence="2">
    <location>
        <begin position="69"/>
        <end position="86"/>
    </location>
</feature>
<feature type="topological domain" description="Extracellular" evidence="2">
    <location>
        <begin position="87"/>
        <end position="145"/>
    </location>
</feature>
<feature type="region of interest" description="Disordered" evidence="3">
    <location>
        <begin position="1"/>
        <end position="49"/>
    </location>
</feature>
<feature type="compositionally biased region" description="Basic and acidic residues" evidence="3">
    <location>
        <begin position="1"/>
        <end position="16"/>
    </location>
</feature>
<keyword id="KW-1043">Host membrane</keyword>
<keyword id="KW-0472">Membrane</keyword>
<keyword id="KW-0812">Transmembrane</keyword>
<keyword id="KW-1133">Transmembrane helix</keyword>
<sequence length="145" mass="16633">MVSRDQTNDRSDDKPARSNPTDCSVHTEPSDANNRTGVHSGRHPGEAHSQVRDLDLQFDCGGHRVRANCLFPWIPWLNCGCSLHTAEQWELQVRSDAPDCPEPTGQLQLLQTSESESHSEVKHTPWWRLCTKRHHKRRDLPRKPE</sequence>
<name>VP5_IBDV5</name>
<comment type="function">
    <text evidence="1">Plays a role in the release of virion progenies by disrupting the host plasma membrane.</text>
</comment>
<comment type="subcellular location">
    <subcellularLocation>
        <location evidence="4">Host membrane</location>
        <topology evidence="4">Single-pass membrane protein</topology>
    </subcellularLocation>
</comment>
<comment type="similarity">
    <text evidence="4">Belongs to the avibirnavirus/aquabirnavirus VP5 protein family.</text>
</comment>
<organism>
    <name type="scientific">Avian infectious bursal disease virus (strain 52/70)</name>
    <name type="common">IBDV</name>
    <name type="synonym">Gumboro disease virus</name>
    <dbReference type="NCBI Taxonomy" id="10996"/>
    <lineage>
        <taxon>Viruses</taxon>
        <taxon>Riboviria</taxon>
        <taxon>Orthornavirae</taxon>
        <taxon>Birnaviridae</taxon>
        <taxon>Avibirnavirus</taxon>
        <taxon>Avibirnavirus gumboroense</taxon>
    </lineage>
</organism>
<evidence type="ECO:0000250" key="1"/>
<evidence type="ECO:0000255" key="2"/>
<evidence type="ECO:0000256" key="3">
    <source>
        <dbReference type="SAM" id="MobiDB-lite"/>
    </source>
</evidence>
<evidence type="ECO:0000305" key="4"/>
<organismHost>
    <name type="scientific">Gallus gallus</name>
    <name type="common">Chicken</name>
    <dbReference type="NCBI Taxonomy" id="9031"/>
</organismHost>
<organismHost>
    <name type="scientific">Meleagris gallopavo</name>
    <name type="common">Wild turkey</name>
    <dbReference type="NCBI Taxonomy" id="9103"/>
</organismHost>
<proteinExistence type="inferred from homology"/>